<name>RS12_PORGI</name>
<feature type="chain" id="PRO_0000146285" description="Small ribosomal subunit protein uS12">
    <location>
        <begin position="1"/>
        <end position="134"/>
    </location>
</feature>
<feature type="region of interest" description="Disordered" evidence="3">
    <location>
        <begin position="1"/>
        <end position="26"/>
    </location>
</feature>
<feature type="region of interest" description="Disordered" evidence="3">
    <location>
        <begin position="103"/>
        <end position="134"/>
    </location>
</feature>
<feature type="compositionally biased region" description="Basic and acidic residues" evidence="3">
    <location>
        <begin position="10"/>
        <end position="20"/>
    </location>
</feature>
<feature type="compositionally biased region" description="Basic residues" evidence="3">
    <location>
        <begin position="111"/>
        <end position="123"/>
    </location>
</feature>
<feature type="compositionally biased region" description="Low complexity" evidence="3">
    <location>
        <begin position="124"/>
        <end position="134"/>
    </location>
</feature>
<feature type="modified residue" description="3-methylthioaspartic acid" evidence="1">
    <location>
        <position position="89"/>
    </location>
</feature>
<dbReference type="EMBL" id="AE015924">
    <property type="protein sequence ID" value="AAQ66923.1"/>
    <property type="molecule type" value="Genomic_DNA"/>
</dbReference>
<dbReference type="RefSeq" id="WP_004583602.1">
    <property type="nucleotide sequence ID" value="NC_002950.2"/>
</dbReference>
<dbReference type="SMR" id="Q7MTK9"/>
<dbReference type="STRING" id="242619.PG_1942"/>
<dbReference type="EnsemblBacteria" id="AAQ66923">
    <property type="protein sequence ID" value="AAQ66923"/>
    <property type="gene ID" value="PG_1942"/>
</dbReference>
<dbReference type="GeneID" id="94550669"/>
<dbReference type="KEGG" id="pgi:PG_1942"/>
<dbReference type="eggNOG" id="COG0048">
    <property type="taxonomic scope" value="Bacteria"/>
</dbReference>
<dbReference type="HOGENOM" id="CLU_104295_1_2_10"/>
<dbReference type="Proteomes" id="UP000000588">
    <property type="component" value="Chromosome"/>
</dbReference>
<dbReference type="GO" id="GO:0015935">
    <property type="term" value="C:small ribosomal subunit"/>
    <property type="evidence" value="ECO:0007669"/>
    <property type="project" value="InterPro"/>
</dbReference>
<dbReference type="GO" id="GO:0019843">
    <property type="term" value="F:rRNA binding"/>
    <property type="evidence" value="ECO:0007669"/>
    <property type="project" value="UniProtKB-UniRule"/>
</dbReference>
<dbReference type="GO" id="GO:0003735">
    <property type="term" value="F:structural constituent of ribosome"/>
    <property type="evidence" value="ECO:0007669"/>
    <property type="project" value="InterPro"/>
</dbReference>
<dbReference type="GO" id="GO:0000049">
    <property type="term" value="F:tRNA binding"/>
    <property type="evidence" value="ECO:0007669"/>
    <property type="project" value="UniProtKB-UniRule"/>
</dbReference>
<dbReference type="GO" id="GO:0006412">
    <property type="term" value="P:translation"/>
    <property type="evidence" value="ECO:0007669"/>
    <property type="project" value="UniProtKB-UniRule"/>
</dbReference>
<dbReference type="CDD" id="cd03368">
    <property type="entry name" value="Ribosomal_S12"/>
    <property type="match status" value="1"/>
</dbReference>
<dbReference type="FunFam" id="2.40.50.140:FF:000001">
    <property type="entry name" value="30S ribosomal protein S12"/>
    <property type="match status" value="1"/>
</dbReference>
<dbReference type="Gene3D" id="2.40.50.140">
    <property type="entry name" value="Nucleic acid-binding proteins"/>
    <property type="match status" value="1"/>
</dbReference>
<dbReference type="HAMAP" id="MF_00403_B">
    <property type="entry name" value="Ribosomal_uS12_B"/>
    <property type="match status" value="1"/>
</dbReference>
<dbReference type="InterPro" id="IPR012340">
    <property type="entry name" value="NA-bd_OB-fold"/>
</dbReference>
<dbReference type="InterPro" id="IPR006032">
    <property type="entry name" value="Ribosomal_uS12"/>
</dbReference>
<dbReference type="InterPro" id="IPR005679">
    <property type="entry name" value="Ribosomal_uS12_bac"/>
</dbReference>
<dbReference type="NCBIfam" id="TIGR00981">
    <property type="entry name" value="rpsL_bact"/>
    <property type="match status" value="1"/>
</dbReference>
<dbReference type="PANTHER" id="PTHR11652">
    <property type="entry name" value="30S RIBOSOMAL PROTEIN S12 FAMILY MEMBER"/>
    <property type="match status" value="1"/>
</dbReference>
<dbReference type="Pfam" id="PF00164">
    <property type="entry name" value="Ribosom_S12_S23"/>
    <property type="match status" value="1"/>
</dbReference>
<dbReference type="PIRSF" id="PIRSF002133">
    <property type="entry name" value="Ribosomal_S12/S23"/>
    <property type="match status" value="1"/>
</dbReference>
<dbReference type="PRINTS" id="PR01034">
    <property type="entry name" value="RIBOSOMALS12"/>
</dbReference>
<dbReference type="SUPFAM" id="SSF50249">
    <property type="entry name" value="Nucleic acid-binding proteins"/>
    <property type="match status" value="1"/>
</dbReference>
<dbReference type="PROSITE" id="PS00055">
    <property type="entry name" value="RIBOSOMAL_S12"/>
    <property type="match status" value="1"/>
</dbReference>
<keyword id="KW-0488">Methylation</keyword>
<keyword id="KW-1185">Reference proteome</keyword>
<keyword id="KW-0687">Ribonucleoprotein</keyword>
<keyword id="KW-0689">Ribosomal protein</keyword>
<keyword id="KW-0694">RNA-binding</keyword>
<keyword id="KW-0699">rRNA-binding</keyword>
<keyword id="KW-0820">tRNA-binding</keyword>
<organism>
    <name type="scientific">Porphyromonas gingivalis (strain ATCC BAA-308 / W83)</name>
    <dbReference type="NCBI Taxonomy" id="242619"/>
    <lineage>
        <taxon>Bacteria</taxon>
        <taxon>Pseudomonadati</taxon>
        <taxon>Bacteroidota</taxon>
        <taxon>Bacteroidia</taxon>
        <taxon>Bacteroidales</taxon>
        <taxon>Porphyromonadaceae</taxon>
        <taxon>Porphyromonas</taxon>
    </lineage>
</organism>
<proteinExistence type="inferred from homology"/>
<protein>
    <recommendedName>
        <fullName evidence="2">Small ribosomal subunit protein uS12</fullName>
    </recommendedName>
    <alternativeName>
        <fullName evidence="4">30S ribosomal protein S12</fullName>
    </alternativeName>
</protein>
<sequence length="134" mass="14769">MPTIQQLVRKGRESFADKSKSPALNSCPQRRGVCVRVYTTTPKKPNSAMRKVARVRLTNSKEVNAYIPGEGHNLQEHSIVLVRGGRVKDLPGVRYHIVRGTLDTAGVNGRTQRRSKYGAKRPKPGQAPAAKGKK</sequence>
<evidence type="ECO:0000250" key="1"/>
<evidence type="ECO:0000255" key="2">
    <source>
        <dbReference type="HAMAP-Rule" id="MF_00403"/>
    </source>
</evidence>
<evidence type="ECO:0000256" key="3">
    <source>
        <dbReference type="SAM" id="MobiDB-lite"/>
    </source>
</evidence>
<evidence type="ECO:0000305" key="4"/>
<reference key="1">
    <citation type="journal article" date="2003" name="J. Bacteriol.">
        <title>Complete genome sequence of the oral pathogenic bacterium Porphyromonas gingivalis strain W83.</title>
        <authorList>
            <person name="Nelson K.E."/>
            <person name="Fleischmann R.D."/>
            <person name="DeBoy R.T."/>
            <person name="Paulsen I.T."/>
            <person name="Fouts D.E."/>
            <person name="Eisen J.A."/>
            <person name="Daugherty S.C."/>
            <person name="Dodson R.J."/>
            <person name="Durkin A.S."/>
            <person name="Gwinn M.L."/>
            <person name="Haft D.H."/>
            <person name="Kolonay J.F."/>
            <person name="Nelson W.C."/>
            <person name="Mason T.M."/>
            <person name="Tallon L."/>
            <person name="Gray J."/>
            <person name="Granger D."/>
            <person name="Tettelin H."/>
            <person name="Dong H."/>
            <person name="Galvin J.L."/>
            <person name="Duncan M.J."/>
            <person name="Dewhirst F.E."/>
            <person name="Fraser C.M."/>
        </authorList>
    </citation>
    <scope>NUCLEOTIDE SEQUENCE [LARGE SCALE GENOMIC DNA]</scope>
    <source>
        <strain>ATCC BAA-308 / W83</strain>
    </source>
</reference>
<gene>
    <name evidence="2" type="primary">rpsL</name>
    <name type="ordered locus">PG_1942</name>
</gene>
<comment type="function">
    <text evidence="2">With S4 and S5 plays an important role in translational accuracy.</text>
</comment>
<comment type="function">
    <text evidence="2">Interacts with and stabilizes bases of the 16S rRNA that are involved in tRNA selection in the A site and with the mRNA backbone. Located at the interface of the 30S and 50S subunits, it traverses the body of the 30S subunit contacting proteins on the other side and probably holding the rRNA structure together. The combined cluster of proteins S8, S12 and S17 appears to hold together the shoulder and platform of the 30S subunit.</text>
</comment>
<comment type="subunit">
    <text evidence="2">Part of the 30S ribosomal subunit. Contacts proteins S8 and S17. May interact with IF1 in the 30S initiation complex.</text>
</comment>
<comment type="similarity">
    <text evidence="2">Belongs to the universal ribosomal protein uS12 family.</text>
</comment>
<accession>Q7MTK9</accession>